<comment type="function">
    <text>Surrounds and interacts with the genomic dsRNA. Possesses ss- and dsRNA-binding capacity. Its hydrophilic nature and capability to bind ss- and dsRNA suggest that it interacts with BTV genomic RNA.</text>
</comment>
<comment type="subcellular location">
    <subcellularLocation>
        <location>Virion</location>
    </subcellularLocation>
    <text>Inner capsid.</text>
</comment>
<comment type="alternative products">
    <event type="alternative initiation"/>
    <isoform>
        <id>P33423-1</id>
        <name>Protein VP6-B</name>
        <sequence type="displayed"/>
    </isoform>
    <isoform>
        <id>Q98829-1</id>
        <name>Protein VP6-A</name>
        <sequence type="external"/>
    </isoform>
</comment>
<comment type="similarity">
    <text evidence="2">Belongs to the orbivirus VP6 family.</text>
</comment>
<dbReference type="EMBL" id="L08669">
    <property type="protein sequence ID" value="AAA42818.1"/>
    <property type="molecule type" value="Genomic_RNA"/>
</dbReference>
<dbReference type="PIR" id="B48561">
    <property type="entry name" value="B48561"/>
</dbReference>
<dbReference type="SMR" id="P33423"/>
<dbReference type="GO" id="GO:0019028">
    <property type="term" value="C:viral capsid"/>
    <property type="evidence" value="ECO:0007669"/>
    <property type="project" value="InterPro"/>
</dbReference>
<dbReference type="GO" id="GO:0005198">
    <property type="term" value="F:structural molecule activity"/>
    <property type="evidence" value="ECO:0007669"/>
    <property type="project" value="InterPro"/>
</dbReference>
<dbReference type="InterPro" id="IPR001399">
    <property type="entry name" value="Orbi_VP6"/>
</dbReference>
<dbReference type="Pfam" id="PF01516">
    <property type="entry name" value="Orbi_VP6"/>
    <property type="match status" value="1"/>
</dbReference>
<dbReference type="PRINTS" id="PR00902">
    <property type="entry name" value="VP6CAPSID"/>
</dbReference>
<evidence type="ECO:0000256" key="1">
    <source>
        <dbReference type="SAM" id="MobiDB-lite"/>
    </source>
</evidence>
<evidence type="ECO:0000305" key="2"/>
<accession>P33423</accession>
<feature type="chain" id="PRO_0000222723" description="Protein VP6-B">
    <location>
        <begin position="1"/>
        <end position="325"/>
    </location>
</feature>
<feature type="region of interest" description="Disordered" evidence="1">
    <location>
        <begin position="23"/>
        <end position="123"/>
    </location>
</feature>
<feature type="region of interest" description="Disordered" evidence="1">
    <location>
        <begin position="176"/>
        <end position="229"/>
    </location>
</feature>
<feature type="compositionally biased region" description="Basic and acidic residues" evidence="1">
    <location>
        <begin position="32"/>
        <end position="52"/>
    </location>
</feature>
<feature type="compositionally biased region" description="Basic and acidic residues" evidence="1">
    <location>
        <begin position="61"/>
        <end position="79"/>
    </location>
</feature>
<feature type="compositionally biased region" description="Gly residues" evidence="1">
    <location>
        <begin position="106"/>
        <end position="123"/>
    </location>
</feature>
<feature type="compositionally biased region" description="Basic and acidic residues" evidence="1">
    <location>
        <begin position="176"/>
        <end position="201"/>
    </location>
</feature>
<feature type="compositionally biased region" description="Basic and acidic residues" evidence="1">
    <location>
        <begin position="210"/>
        <end position="226"/>
    </location>
</feature>
<sequence>MLLAPGDVIKRSSEELKQRQIQINLIDWIESESGKEDKAEPKEESKAEESKDGQGTQSESSQKKEGSKEAKDADVDRRIHTAVGSGSSAKGPGVRANENVDRGDGKVGGGGGNADAGVGTIGANGGRWVVLTEEIARAIESKYGTKIDVYRDKVPAQIIEVERSLQKELGISREGVAEQTERLRDLRRKEKSGAHAKAAERGRRKQGKKPHGDVQKEGTEEEKTSEEQASVGIAIEGVMSQKKLLSMIGGVERKMAPIGARESAVMLVSNSIKDVVRATAYFTAPTGDPHWKEVAREASKKKNILAYTSTGGDVKTEFLHLIDHL</sequence>
<proteinExistence type="inferred from homology"/>
<gene>
    <name type="primary">Segment-9</name>
</gene>
<organism>
    <name type="scientific">Bluetongue virus 10 (isolate USA)</name>
    <name type="common">BTV 10</name>
    <dbReference type="NCBI Taxonomy" id="10900"/>
    <lineage>
        <taxon>Viruses</taxon>
        <taxon>Riboviria</taxon>
        <taxon>Orthornavirae</taxon>
        <taxon>Duplornaviricota</taxon>
        <taxon>Resentoviricetes</taxon>
        <taxon>Reovirales</taxon>
        <taxon>Sedoreoviridae</taxon>
        <taxon>Orbivirus</taxon>
        <taxon>Bluetongue virus</taxon>
    </lineage>
</organism>
<protein>
    <recommendedName>
        <fullName>Protein VP6-B</fullName>
    </recommendedName>
    <alternativeName>
        <fullName>Minor inner core protein VP6-B</fullName>
    </alternativeName>
</protein>
<keyword id="KW-0024">Alternative initiation</keyword>
<keyword id="KW-0946">Virion</keyword>
<reference key="1">
    <citation type="journal article" date="1992" name="Virus Res.">
        <title>Comparative sequence analyses of the cognate structural protein VP6 genes of five US bluetongue viruses.</title>
        <authorList>
            <person name="Hwang G.-Y."/>
            <person name="Chiou J.-F."/>
            <person name="Yang Y.-Y."/>
            <person name="Li J.K.-K."/>
        </authorList>
    </citation>
    <scope>NUCLEOTIDE SEQUENCE [GENOMIC RNA]</scope>
</reference>
<name>VP6B_BTV10</name>
<organismHost>
    <name type="scientific">Antilocapra americana</name>
    <name type="common">Pronghorn</name>
    <dbReference type="NCBI Taxonomy" id="9891"/>
</organismHost>
<organismHost>
    <name type="scientific">Bos taurus</name>
    <name type="common">Bovine</name>
    <dbReference type="NCBI Taxonomy" id="9913"/>
</organismHost>
<organismHost>
    <name type="scientific">Capra hircus</name>
    <name type="common">Goat</name>
    <dbReference type="NCBI Taxonomy" id="9925"/>
</organismHost>
<organismHost>
    <name type="scientific">Culicoides variipennis</name>
    <name type="common">Biting midge</name>
    <dbReference type="NCBI Taxonomy" id="46212"/>
</organismHost>
<organismHost>
    <name type="scientific">Ovis aries</name>
    <name type="common">Sheep</name>
    <dbReference type="NCBI Taxonomy" id="9940"/>
</organismHost>